<evidence type="ECO:0000255" key="1">
    <source>
        <dbReference type="HAMAP-Rule" id="MF_01635"/>
    </source>
</evidence>
<comment type="function">
    <text evidence="1">Catalyzes the prenylation of para-hydroxybenzoate (PHB) with an all-trans polyprenyl group. Mediates the second step in the final reaction sequence of ubiquinone-8 (UQ-8) biosynthesis, which is the condensation of the polyisoprenoid side chain with PHB, generating the first membrane-bound Q intermediate 3-octaprenyl-4-hydroxybenzoate.</text>
</comment>
<comment type="catalytic activity">
    <reaction evidence="1">
        <text>all-trans-octaprenyl diphosphate + 4-hydroxybenzoate = 4-hydroxy-3-(all-trans-octaprenyl)benzoate + diphosphate</text>
        <dbReference type="Rhea" id="RHEA:27782"/>
        <dbReference type="ChEBI" id="CHEBI:1617"/>
        <dbReference type="ChEBI" id="CHEBI:17879"/>
        <dbReference type="ChEBI" id="CHEBI:33019"/>
        <dbReference type="ChEBI" id="CHEBI:57711"/>
        <dbReference type="EC" id="2.5.1.39"/>
    </reaction>
</comment>
<comment type="cofactor">
    <cofactor evidence="1">
        <name>Mg(2+)</name>
        <dbReference type="ChEBI" id="CHEBI:18420"/>
    </cofactor>
</comment>
<comment type="pathway">
    <text evidence="1">Cofactor biosynthesis; ubiquinone biosynthesis.</text>
</comment>
<comment type="subcellular location">
    <subcellularLocation>
        <location evidence="1">Cell inner membrane</location>
        <topology evidence="1">Multi-pass membrane protein</topology>
    </subcellularLocation>
</comment>
<comment type="similarity">
    <text evidence="1">Belongs to the UbiA prenyltransferase family.</text>
</comment>
<organism>
    <name type="scientific">Idiomarina loihiensis (strain ATCC BAA-735 / DSM 15497 / L2-TR)</name>
    <dbReference type="NCBI Taxonomy" id="283942"/>
    <lineage>
        <taxon>Bacteria</taxon>
        <taxon>Pseudomonadati</taxon>
        <taxon>Pseudomonadota</taxon>
        <taxon>Gammaproteobacteria</taxon>
        <taxon>Alteromonadales</taxon>
        <taxon>Idiomarinaceae</taxon>
        <taxon>Idiomarina</taxon>
    </lineage>
</organism>
<reference key="1">
    <citation type="journal article" date="2004" name="Proc. Natl. Acad. Sci. U.S.A.">
        <title>Genome sequence of the deep-sea gamma-proteobacterium Idiomarina loihiensis reveals amino acid fermentation as a source of carbon and energy.</title>
        <authorList>
            <person name="Hou S."/>
            <person name="Saw J.H."/>
            <person name="Lee K.S."/>
            <person name="Freitas T.A."/>
            <person name="Belisle C."/>
            <person name="Kawarabayasi Y."/>
            <person name="Donachie S.P."/>
            <person name="Pikina A."/>
            <person name="Galperin M.Y."/>
            <person name="Koonin E.V."/>
            <person name="Makarova K.S."/>
            <person name="Omelchenko M.V."/>
            <person name="Sorokin A."/>
            <person name="Wolf Y.I."/>
            <person name="Li Q.X."/>
            <person name="Keum Y.S."/>
            <person name="Campbell S."/>
            <person name="Denery J."/>
            <person name="Aizawa S."/>
            <person name="Shibata S."/>
            <person name="Malahoff A."/>
            <person name="Alam M."/>
        </authorList>
    </citation>
    <scope>NUCLEOTIDE SEQUENCE [LARGE SCALE GENOMIC DNA]</scope>
    <source>
        <strain>ATCC BAA-735 / DSM 15497 / L2-TR</strain>
    </source>
</reference>
<dbReference type="EC" id="2.5.1.39" evidence="1"/>
<dbReference type="EMBL" id="AE017340">
    <property type="protein sequence ID" value="AAV81107.1"/>
    <property type="molecule type" value="Genomic_DNA"/>
</dbReference>
<dbReference type="RefSeq" id="WP_011233526.1">
    <property type="nucleotide sequence ID" value="NC_006512.1"/>
</dbReference>
<dbReference type="SMR" id="Q5QUP3"/>
<dbReference type="STRING" id="283942.IL0264"/>
<dbReference type="GeneID" id="41335411"/>
<dbReference type="KEGG" id="ilo:IL0264"/>
<dbReference type="eggNOG" id="COG0382">
    <property type="taxonomic scope" value="Bacteria"/>
</dbReference>
<dbReference type="HOGENOM" id="CLU_034879_1_0_6"/>
<dbReference type="OrthoDB" id="9782418at2"/>
<dbReference type="UniPathway" id="UPA00232"/>
<dbReference type="Proteomes" id="UP000001171">
    <property type="component" value="Chromosome"/>
</dbReference>
<dbReference type="GO" id="GO:0005886">
    <property type="term" value="C:plasma membrane"/>
    <property type="evidence" value="ECO:0007669"/>
    <property type="project" value="UniProtKB-SubCell"/>
</dbReference>
<dbReference type="GO" id="GO:0008412">
    <property type="term" value="F:4-hydroxybenzoate polyprenyltransferase activity"/>
    <property type="evidence" value="ECO:0007669"/>
    <property type="project" value="UniProtKB-UniRule"/>
</dbReference>
<dbReference type="GO" id="GO:0006744">
    <property type="term" value="P:ubiquinone biosynthetic process"/>
    <property type="evidence" value="ECO:0007669"/>
    <property type="project" value="UniProtKB-UniRule"/>
</dbReference>
<dbReference type="CDD" id="cd13959">
    <property type="entry name" value="PT_UbiA_COQ2"/>
    <property type="match status" value="1"/>
</dbReference>
<dbReference type="FunFam" id="1.10.357.140:FF:000002">
    <property type="entry name" value="4-hydroxybenzoate octaprenyltransferase"/>
    <property type="match status" value="1"/>
</dbReference>
<dbReference type="FunFam" id="1.20.120.1780:FF:000001">
    <property type="entry name" value="4-hydroxybenzoate octaprenyltransferase"/>
    <property type="match status" value="1"/>
</dbReference>
<dbReference type="Gene3D" id="1.10.357.140">
    <property type="entry name" value="UbiA prenyltransferase"/>
    <property type="match status" value="1"/>
</dbReference>
<dbReference type="Gene3D" id="1.20.120.1780">
    <property type="entry name" value="UbiA prenyltransferase"/>
    <property type="match status" value="1"/>
</dbReference>
<dbReference type="HAMAP" id="MF_01635">
    <property type="entry name" value="UbiA"/>
    <property type="match status" value="1"/>
</dbReference>
<dbReference type="InterPro" id="IPR006370">
    <property type="entry name" value="HB_polyprenyltransferase-like"/>
</dbReference>
<dbReference type="InterPro" id="IPR039653">
    <property type="entry name" value="Prenyltransferase"/>
</dbReference>
<dbReference type="InterPro" id="IPR000537">
    <property type="entry name" value="UbiA_prenyltransferase"/>
</dbReference>
<dbReference type="InterPro" id="IPR030470">
    <property type="entry name" value="UbiA_prenylTrfase_CS"/>
</dbReference>
<dbReference type="InterPro" id="IPR044878">
    <property type="entry name" value="UbiA_sf"/>
</dbReference>
<dbReference type="NCBIfam" id="TIGR01474">
    <property type="entry name" value="ubiA_proteo"/>
    <property type="match status" value="1"/>
</dbReference>
<dbReference type="PANTHER" id="PTHR11048:SF28">
    <property type="entry name" value="4-HYDROXYBENZOATE POLYPRENYLTRANSFERASE, MITOCHONDRIAL"/>
    <property type="match status" value="1"/>
</dbReference>
<dbReference type="PANTHER" id="PTHR11048">
    <property type="entry name" value="PRENYLTRANSFERASES"/>
    <property type="match status" value="1"/>
</dbReference>
<dbReference type="Pfam" id="PF01040">
    <property type="entry name" value="UbiA"/>
    <property type="match status" value="1"/>
</dbReference>
<dbReference type="PROSITE" id="PS00943">
    <property type="entry name" value="UBIA"/>
    <property type="match status" value="1"/>
</dbReference>
<proteinExistence type="inferred from homology"/>
<sequence>MQKLVAFWQLMRADRPIGTYLLAWPTIWALMIAGAGEPPLRIVVIFLLGTFVMRSAGCVINDFADRNYDGHVRRTRQRPIPAGRISATEAMIGFIALLAIAFGLVMQLNTETVMLSFFAAGVAALYPFCKRWTHLPQIVLGIAFSFGIPMAFTALESDQWFIAGLLFLANILWTVAYDTEYAMADREDDLKIGLQSTAILFGRFDRLAIGLLQLATLALLGWILHLITVELWVWLALAAIFLLFAYQHWLIRHREPGKCFQAFLHNHYIGMVFAIGLAVHYWF</sequence>
<keyword id="KW-0997">Cell inner membrane</keyword>
<keyword id="KW-1003">Cell membrane</keyword>
<keyword id="KW-0460">Magnesium</keyword>
<keyword id="KW-0472">Membrane</keyword>
<keyword id="KW-1185">Reference proteome</keyword>
<keyword id="KW-0808">Transferase</keyword>
<keyword id="KW-0812">Transmembrane</keyword>
<keyword id="KW-1133">Transmembrane helix</keyword>
<keyword id="KW-0831">Ubiquinone biosynthesis</keyword>
<feature type="chain" id="PRO_0000262802" description="4-hydroxybenzoate octaprenyltransferase">
    <location>
        <begin position="1"/>
        <end position="283"/>
    </location>
</feature>
<feature type="transmembrane region" description="Helical" evidence="1">
    <location>
        <begin position="16"/>
        <end position="36"/>
    </location>
</feature>
<feature type="transmembrane region" description="Helical" evidence="1">
    <location>
        <begin position="40"/>
        <end position="60"/>
    </location>
</feature>
<feature type="transmembrane region" description="Helical" evidence="1">
    <location>
        <begin position="85"/>
        <end position="105"/>
    </location>
</feature>
<feature type="transmembrane region" description="Helical" evidence="1">
    <location>
        <begin position="108"/>
        <end position="128"/>
    </location>
</feature>
<feature type="transmembrane region" description="Helical" evidence="1">
    <location>
        <begin position="135"/>
        <end position="155"/>
    </location>
</feature>
<feature type="transmembrane region" description="Helical" evidence="1">
    <location>
        <begin position="160"/>
        <end position="180"/>
    </location>
</feature>
<feature type="transmembrane region" description="Helical" evidence="1">
    <location>
        <begin position="204"/>
        <end position="224"/>
    </location>
</feature>
<feature type="transmembrane region" description="Helical" evidence="1">
    <location>
        <begin position="226"/>
        <end position="246"/>
    </location>
</feature>
<feature type="transmembrane region" description="Helical" evidence="1">
    <location>
        <begin position="263"/>
        <end position="283"/>
    </location>
</feature>
<accession>Q5QUP3</accession>
<protein>
    <recommendedName>
        <fullName evidence="1">4-hydroxybenzoate octaprenyltransferase</fullName>
        <ecNumber evidence="1">2.5.1.39</ecNumber>
    </recommendedName>
    <alternativeName>
        <fullName evidence="1">4-HB polyprenyltransferase</fullName>
    </alternativeName>
</protein>
<name>UBIA_IDILO</name>
<gene>
    <name evidence="1" type="primary">ubiA</name>
    <name type="ordered locus">IL0264</name>
</gene>